<dbReference type="EC" id="1.3.3.6" evidence="3"/>
<dbReference type="EMBL" id="AJ278430">
    <property type="protein sequence ID" value="CAC20692.1"/>
    <property type="molecule type" value="mRNA"/>
</dbReference>
<dbReference type="EMBL" id="BC044725">
    <property type="protein sequence ID" value="AAH44725.1"/>
    <property type="molecule type" value="mRNA"/>
</dbReference>
<dbReference type="EMBL" id="BC055019">
    <property type="protein sequence ID" value="AAH55019.1"/>
    <property type="molecule type" value="mRNA"/>
</dbReference>
<dbReference type="CCDS" id="CCDS19232.1"/>
<dbReference type="RefSeq" id="NP_001343947.1">
    <property type="nucleotide sequence ID" value="NM_001357018.2"/>
</dbReference>
<dbReference type="RefSeq" id="NP_001343948.1">
    <property type="nucleotide sequence ID" value="NM_001357019.2"/>
</dbReference>
<dbReference type="RefSeq" id="NP_001412726.1">
    <property type="nucleotide sequence ID" value="NM_001425797.1"/>
</dbReference>
<dbReference type="RefSeq" id="NP_109646.2">
    <property type="nucleotide sequence ID" value="NM_030721.2"/>
</dbReference>
<dbReference type="RefSeq" id="XP_006504261.1">
    <property type="nucleotide sequence ID" value="XM_006504198.3"/>
</dbReference>
<dbReference type="RefSeq" id="XP_017176670.1">
    <property type="nucleotide sequence ID" value="XM_017321181.1"/>
</dbReference>
<dbReference type="SMR" id="Q9EPL9"/>
<dbReference type="BioGRID" id="219848">
    <property type="interactions" value="1"/>
</dbReference>
<dbReference type="FunCoup" id="Q9EPL9">
    <property type="interactions" value="2303"/>
</dbReference>
<dbReference type="STRING" id="10090.ENSMUSP00000063412"/>
<dbReference type="GlyGen" id="Q9EPL9">
    <property type="glycosylation" value="1 site, 1 N-linked glycan (1 site)"/>
</dbReference>
<dbReference type="iPTMnet" id="Q9EPL9"/>
<dbReference type="PhosphoSitePlus" id="Q9EPL9"/>
<dbReference type="SwissPalm" id="Q9EPL9"/>
<dbReference type="jPOST" id="Q9EPL9"/>
<dbReference type="PaxDb" id="10090-ENSMUSP00000063412"/>
<dbReference type="PeptideAtlas" id="Q9EPL9"/>
<dbReference type="ProteomicsDB" id="285939"/>
<dbReference type="Pumba" id="Q9EPL9"/>
<dbReference type="Antibodypedia" id="52278">
    <property type="antibodies" value="113 antibodies from 23 providers"/>
</dbReference>
<dbReference type="DNASU" id="80911"/>
<dbReference type="Ensembl" id="ENSMUST00000068947.14">
    <property type="protein sequence ID" value="ENSMUSP00000063412.8"/>
    <property type="gene ID" value="ENSMUSG00000029098.18"/>
</dbReference>
<dbReference type="Ensembl" id="ENSMUST00000114237.8">
    <property type="protein sequence ID" value="ENSMUSP00000109875.2"/>
    <property type="gene ID" value="ENSMUSG00000029098.18"/>
</dbReference>
<dbReference type="GeneID" id="80911"/>
<dbReference type="KEGG" id="mmu:80911"/>
<dbReference type="UCSC" id="uc008xdx.1">
    <property type="organism name" value="mouse"/>
</dbReference>
<dbReference type="AGR" id="MGI:1933156"/>
<dbReference type="CTD" id="8310"/>
<dbReference type="MGI" id="MGI:1933156">
    <property type="gene designation" value="Acox3"/>
</dbReference>
<dbReference type="VEuPathDB" id="HostDB:ENSMUSG00000029098"/>
<dbReference type="eggNOG" id="KOG0135">
    <property type="taxonomic scope" value="Eukaryota"/>
</dbReference>
<dbReference type="GeneTree" id="ENSGT00940000159423"/>
<dbReference type="InParanoid" id="Q9EPL9"/>
<dbReference type="OMA" id="SINKRFA"/>
<dbReference type="OrthoDB" id="538336at2759"/>
<dbReference type="PhylomeDB" id="Q9EPL9"/>
<dbReference type="TreeFam" id="TF314226"/>
<dbReference type="Reactome" id="R-MMU-389887">
    <property type="pathway name" value="Beta-oxidation of pristanoyl-CoA"/>
</dbReference>
<dbReference type="Reactome" id="R-MMU-9033241">
    <property type="pathway name" value="Peroxisomal protein import"/>
</dbReference>
<dbReference type="UniPathway" id="UPA00661"/>
<dbReference type="BioGRID-ORCS" id="80911">
    <property type="hits" value="2 hits in 77 CRISPR screens"/>
</dbReference>
<dbReference type="ChiTaRS" id="Acox3">
    <property type="organism name" value="mouse"/>
</dbReference>
<dbReference type="PRO" id="PR:Q9EPL9"/>
<dbReference type="Proteomes" id="UP000000589">
    <property type="component" value="Chromosome 5"/>
</dbReference>
<dbReference type="RNAct" id="Q9EPL9">
    <property type="molecule type" value="protein"/>
</dbReference>
<dbReference type="Bgee" id="ENSMUSG00000029098">
    <property type="expression patterns" value="Expressed in right kidney and 131 other cell types or tissues"/>
</dbReference>
<dbReference type="ExpressionAtlas" id="Q9EPL9">
    <property type="expression patterns" value="baseline and differential"/>
</dbReference>
<dbReference type="GO" id="GO:0005739">
    <property type="term" value="C:mitochondrion"/>
    <property type="evidence" value="ECO:0007005"/>
    <property type="project" value="MGI"/>
</dbReference>
<dbReference type="GO" id="GO:0005782">
    <property type="term" value="C:peroxisomal matrix"/>
    <property type="evidence" value="ECO:0000304"/>
    <property type="project" value="MGI"/>
</dbReference>
<dbReference type="GO" id="GO:0071949">
    <property type="term" value="F:FAD binding"/>
    <property type="evidence" value="ECO:0007669"/>
    <property type="project" value="InterPro"/>
</dbReference>
<dbReference type="GO" id="GO:0005504">
    <property type="term" value="F:fatty acid binding"/>
    <property type="evidence" value="ECO:0007669"/>
    <property type="project" value="InterPro"/>
</dbReference>
<dbReference type="GO" id="GO:0016402">
    <property type="term" value="F:pristanoyl-CoA oxidase activity"/>
    <property type="evidence" value="ECO:0000304"/>
    <property type="project" value="MGI"/>
</dbReference>
<dbReference type="GO" id="GO:0006635">
    <property type="term" value="P:fatty acid beta-oxidation"/>
    <property type="evidence" value="ECO:0000304"/>
    <property type="project" value="MGI"/>
</dbReference>
<dbReference type="GO" id="GO:0033540">
    <property type="term" value="P:fatty acid beta-oxidation using acyl-CoA oxidase"/>
    <property type="evidence" value="ECO:0007669"/>
    <property type="project" value="UniProtKB-UniPathway"/>
</dbReference>
<dbReference type="CDD" id="cd01150">
    <property type="entry name" value="AXO"/>
    <property type="match status" value="1"/>
</dbReference>
<dbReference type="FunFam" id="1.20.140.10:FF:000007">
    <property type="entry name" value="Acyl-coenzyme A oxidase"/>
    <property type="match status" value="1"/>
</dbReference>
<dbReference type="FunFam" id="1.20.140.10:FF:000010">
    <property type="entry name" value="Acyl-coenzyme A oxidase"/>
    <property type="match status" value="1"/>
</dbReference>
<dbReference type="FunFam" id="2.40.110.10:FF:000005">
    <property type="entry name" value="Acyl-coenzyme A oxidase"/>
    <property type="match status" value="1"/>
</dbReference>
<dbReference type="Gene3D" id="2.40.110.10">
    <property type="entry name" value="Butyryl-CoA Dehydrogenase, subunit A, domain 2"/>
    <property type="match status" value="1"/>
</dbReference>
<dbReference type="Gene3D" id="1.20.140.10">
    <property type="entry name" value="Butyryl-CoA Dehydrogenase, subunit A, domain 3"/>
    <property type="match status" value="2"/>
</dbReference>
<dbReference type="InterPro" id="IPR034171">
    <property type="entry name" value="ACO"/>
</dbReference>
<dbReference type="InterPro" id="IPR055060">
    <property type="entry name" value="ACOX_C_alpha1"/>
</dbReference>
<dbReference type="InterPro" id="IPR006091">
    <property type="entry name" value="Acyl-CoA_Oxase/DH_mid-dom"/>
</dbReference>
<dbReference type="InterPro" id="IPR046373">
    <property type="entry name" value="Acyl-CoA_Oxase/DH_mid-dom_sf"/>
</dbReference>
<dbReference type="InterPro" id="IPR012258">
    <property type="entry name" value="Acyl-CoA_oxidase"/>
</dbReference>
<dbReference type="InterPro" id="IPR002655">
    <property type="entry name" value="Acyl-CoA_oxidase_C"/>
</dbReference>
<dbReference type="InterPro" id="IPR036250">
    <property type="entry name" value="AcylCo_DH-like_C"/>
</dbReference>
<dbReference type="InterPro" id="IPR009100">
    <property type="entry name" value="AcylCoA_DH/oxidase_NM_dom_sf"/>
</dbReference>
<dbReference type="PANTHER" id="PTHR10909">
    <property type="entry name" value="ELECTRON TRANSPORT OXIDOREDUCTASE"/>
    <property type="match status" value="1"/>
</dbReference>
<dbReference type="PANTHER" id="PTHR10909:SF390">
    <property type="entry name" value="PEROXISOMAL ACYL-COENZYME A OXIDASE 3"/>
    <property type="match status" value="1"/>
</dbReference>
<dbReference type="Pfam" id="PF01756">
    <property type="entry name" value="ACOX"/>
    <property type="match status" value="1"/>
</dbReference>
<dbReference type="Pfam" id="PF22924">
    <property type="entry name" value="ACOX_C_alpha1"/>
    <property type="match status" value="1"/>
</dbReference>
<dbReference type="Pfam" id="PF02770">
    <property type="entry name" value="Acyl-CoA_dh_M"/>
    <property type="match status" value="1"/>
</dbReference>
<dbReference type="PIRSF" id="PIRSF000168">
    <property type="entry name" value="Acyl-CoA_oxidase"/>
    <property type="match status" value="1"/>
</dbReference>
<dbReference type="SUPFAM" id="SSF47203">
    <property type="entry name" value="Acyl-CoA dehydrogenase C-terminal domain-like"/>
    <property type="match status" value="2"/>
</dbReference>
<dbReference type="SUPFAM" id="SSF56645">
    <property type="entry name" value="Acyl-CoA dehydrogenase NM domain-like"/>
    <property type="match status" value="1"/>
</dbReference>
<gene>
    <name type="primary">Acox3</name>
</gene>
<reference key="1">
    <citation type="submission" date="2000-06" db="EMBL/GenBank/DDBJ databases">
        <title>Cloning of the mouse pristanoyl-CoA oxidase.</title>
        <authorList>
            <person name="Van Veldhoven P.P."/>
            <person name="Ghys K."/>
        </authorList>
    </citation>
    <scope>NUCLEOTIDE SEQUENCE [MRNA]</scope>
</reference>
<reference key="2">
    <citation type="journal article" date="2004" name="Genome Res.">
        <title>The status, quality, and expansion of the NIH full-length cDNA project: the Mammalian Gene Collection (MGC).</title>
        <authorList>
            <consortium name="The MGC Project Team"/>
        </authorList>
    </citation>
    <scope>NUCLEOTIDE SEQUENCE [LARGE SCALE MRNA]</scope>
    <source>
        <strain>FVB/N</strain>
        <strain>FVB/N-3</strain>
        <tissue>Liver</tissue>
        <tissue>Mammary tumor</tissue>
    </source>
</reference>
<reference key="3">
    <citation type="journal article" date="2010" name="Cell">
        <title>A tissue-specific atlas of mouse protein phosphorylation and expression.</title>
        <authorList>
            <person name="Huttlin E.L."/>
            <person name="Jedrychowski M.P."/>
            <person name="Elias J.E."/>
            <person name="Goswami T."/>
            <person name="Rad R."/>
            <person name="Beausoleil S.A."/>
            <person name="Villen J."/>
            <person name="Haas W."/>
            <person name="Sowa M.E."/>
            <person name="Gygi S.P."/>
        </authorList>
    </citation>
    <scope>IDENTIFICATION BY MASS SPECTROMETRY [LARGE SCALE ANALYSIS]</scope>
    <source>
        <tissue>Brown adipose tissue</tissue>
        <tissue>Heart</tissue>
        <tissue>Kidney</tissue>
        <tissue>Liver</tissue>
        <tissue>Lung</tissue>
        <tissue>Spleen</tissue>
        <tissue>Testis</tissue>
    </source>
</reference>
<reference key="4">
    <citation type="journal article" date="2013" name="Mol. Cell">
        <title>SIRT5-mediated lysine desuccinylation impacts diverse metabolic pathways.</title>
        <authorList>
            <person name="Park J."/>
            <person name="Chen Y."/>
            <person name="Tishkoff D.X."/>
            <person name="Peng C."/>
            <person name="Tan M."/>
            <person name="Dai L."/>
            <person name="Xie Z."/>
            <person name="Zhang Y."/>
            <person name="Zwaans B.M."/>
            <person name="Skinner M.E."/>
            <person name="Lombard D.B."/>
            <person name="Zhao Y."/>
        </authorList>
    </citation>
    <scope>SUCCINYLATION [LARGE SCALE ANALYSIS] AT LYS-505</scope>
    <scope>IDENTIFICATION BY MASS SPECTROMETRY [LARGE SCALE ANALYSIS]</scope>
    <source>
        <tissue>Liver</tissue>
    </source>
</reference>
<accession>Q9EPL9</accession>
<accession>Q7TPP6</accession>
<accession>Q80UQ0</accession>
<comment type="function">
    <text evidence="3">Oxidizes the CoA-esters of 2-methyl-branched fatty acids.</text>
</comment>
<comment type="catalytic activity">
    <reaction evidence="3">
        <text>a 2,3-saturated acyl-CoA + O2 = a (2E)-enoyl-CoA + H2O2</text>
        <dbReference type="Rhea" id="RHEA:38959"/>
        <dbReference type="ChEBI" id="CHEBI:15379"/>
        <dbReference type="ChEBI" id="CHEBI:16240"/>
        <dbReference type="ChEBI" id="CHEBI:58856"/>
        <dbReference type="ChEBI" id="CHEBI:65111"/>
        <dbReference type="EC" id="1.3.3.6"/>
    </reaction>
    <physiologicalReaction direction="left-to-right" evidence="3">
        <dbReference type="Rhea" id="RHEA:38960"/>
    </physiologicalReaction>
</comment>
<comment type="catalytic activity">
    <reaction evidence="3">
        <text>(2S)-pristanoyl-CoA + O2 = (2E)-pristenoyl-CoA + H2O2</text>
        <dbReference type="Rhea" id="RHEA:40459"/>
        <dbReference type="ChEBI" id="CHEBI:15379"/>
        <dbReference type="ChEBI" id="CHEBI:16240"/>
        <dbReference type="ChEBI" id="CHEBI:77099"/>
        <dbReference type="ChEBI" id="CHEBI:77293"/>
    </reaction>
    <physiologicalReaction direction="left-to-right" evidence="3">
        <dbReference type="Rhea" id="RHEA:40460"/>
    </physiologicalReaction>
</comment>
<comment type="catalytic activity">
    <reaction evidence="3">
        <text>tetracosanoyl-CoA + O2 = (2E)-tetracosenoyl-CoA + H2O2</text>
        <dbReference type="Rhea" id="RHEA:40319"/>
        <dbReference type="ChEBI" id="CHEBI:15379"/>
        <dbReference type="ChEBI" id="CHEBI:16240"/>
        <dbReference type="ChEBI" id="CHEBI:65052"/>
        <dbReference type="ChEBI" id="CHEBI:74693"/>
    </reaction>
    <physiologicalReaction direction="left-to-right" evidence="3">
        <dbReference type="Rhea" id="RHEA:40320"/>
    </physiologicalReaction>
</comment>
<comment type="catalytic activity">
    <reaction evidence="3">
        <text>hexadecanoyl-CoA + O2 = (2E)-hexadecenoyl-CoA + H2O2</text>
        <dbReference type="Rhea" id="RHEA:40167"/>
        <dbReference type="ChEBI" id="CHEBI:15379"/>
        <dbReference type="ChEBI" id="CHEBI:16240"/>
        <dbReference type="ChEBI" id="CHEBI:57379"/>
        <dbReference type="ChEBI" id="CHEBI:61526"/>
    </reaction>
    <physiologicalReaction direction="left-to-right" evidence="3">
        <dbReference type="Rhea" id="RHEA:40168"/>
    </physiologicalReaction>
</comment>
<comment type="catalytic activity">
    <reaction evidence="3">
        <text>hexadecanedioyl-CoA + O2 = (2E)-hexadecenedioyl-CoA + H2O2</text>
        <dbReference type="Rhea" id="RHEA:40275"/>
        <dbReference type="ChEBI" id="CHEBI:15379"/>
        <dbReference type="ChEBI" id="CHEBI:16240"/>
        <dbReference type="ChEBI" id="CHEBI:77075"/>
        <dbReference type="ChEBI" id="CHEBI:77085"/>
    </reaction>
    <physiologicalReaction direction="left-to-right" evidence="3">
        <dbReference type="Rhea" id="RHEA:40276"/>
    </physiologicalReaction>
</comment>
<comment type="cofactor">
    <cofactor evidence="2">
        <name>FAD</name>
        <dbReference type="ChEBI" id="CHEBI:57692"/>
    </cofactor>
</comment>
<comment type="pathway">
    <text>Lipid metabolism; peroxisomal fatty acid beta-oxidation.</text>
</comment>
<comment type="subcellular location">
    <subcellularLocation>
        <location evidence="4">Peroxisome</location>
    </subcellularLocation>
</comment>
<comment type="similarity">
    <text evidence="4">Belongs to the acyl-CoA oxidase family.</text>
</comment>
<name>ACOX3_MOUSE</name>
<feature type="chain" id="PRO_0000204686" description="Peroxisomal acyl-coenzyme A oxidase 3">
    <location>
        <begin position="1"/>
        <end position="700"/>
    </location>
</feature>
<feature type="short sequence motif" description="Microbody targeting signal" evidence="3">
    <location>
        <begin position="698"/>
        <end position="700"/>
    </location>
</feature>
<feature type="modified residue" description="Phosphoserine" evidence="3">
    <location>
        <position position="10"/>
    </location>
</feature>
<feature type="modified residue" description="Phosphothreonine" evidence="1">
    <location>
        <position position="281"/>
    </location>
</feature>
<feature type="modified residue" description="N6-succinyllysine" evidence="5">
    <location>
        <position position="505"/>
    </location>
</feature>
<feature type="sequence conflict" description="In Ref. 1; CAC20692." evidence="4" ref="1">
    <original>DP</original>
    <variation>ES</variation>
    <location>
        <begin position="177"/>
        <end position="178"/>
    </location>
</feature>
<feature type="sequence conflict" description="In Ref. 1; CAC20692." evidence="4" ref="1">
    <original>Y</original>
    <variation>H</variation>
    <location>
        <position position="364"/>
    </location>
</feature>
<feature type="sequence conflict" description="In Ref. 1; CAC20692." evidence="4" ref="1">
    <original>KP</original>
    <variation>NR</variation>
    <location>
        <begin position="408"/>
        <end position="409"/>
    </location>
</feature>
<feature type="sequence conflict" description="In Ref. 1; CAC20692." evidence="4" ref="1">
    <original>C</original>
    <variation>V</variation>
    <location>
        <position position="555"/>
    </location>
</feature>
<feature type="sequence conflict" description="In Ref. 2; AAH44725." evidence="4" ref="2">
    <original>H</original>
    <variation>Y</variation>
    <location>
        <position position="576"/>
    </location>
</feature>
<feature type="sequence conflict" description="In Ref. 1; CAC20692." evidence="4" ref="1">
    <original>TL</original>
    <variation>SV</variation>
    <location>
        <begin position="593"/>
        <end position="594"/>
    </location>
</feature>
<feature type="sequence conflict" description="In Ref. 1; CAC20692." evidence="4" ref="1">
    <original>L</original>
    <variation>S</variation>
    <location>
        <position position="607"/>
    </location>
</feature>
<feature type="sequence conflict" description="In Ref. 1; CAC20692." evidence="4" ref="1">
    <original>A</original>
    <variation>R</variation>
    <location>
        <position position="669"/>
    </location>
</feature>
<feature type="sequence conflict" description="In Ref. 1; CAC20692." evidence="4" ref="1">
    <original>A</original>
    <variation>R</variation>
    <location>
        <position position="681"/>
    </location>
</feature>
<protein>
    <recommendedName>
        <fullName>Peroxisomal acyl-coenzyme A oxidase 3</fullName>
        <ecNumber evidence="3">1.3.3.6</ecNumber>
    </recommendedName>
    <alternativeName>
        <fullName>Branched-chain acyl-CoA oxidase</fullName>
        <shortName>BRCACox</shortName>
    </alternativeName>
    <alternativeName>
        <fullName evidence="3">Pristanoyl-CoA oxidase</fullName>
    </alternativeName>
</protein>
<organism>
    <name type="scientific">Mus musculus</name>
    <name type="common">Mouse</name>
    <dbReference type="NCBI Taxonomy" id="10090"/>
    <lineage>
        <taxon>Eukaryota</taxon>
        <taxon>Metazoa</taxon>
        <taxon>Chordata</taxon>
        <taxon>Craniata</taxon>
        <taxon>Vertebrata</taxon>
        <taxon>Euteleostomi</taxon>
        <taxon>Mammalia</taxon>
        <taxon>Eutheria</taxon>
        <taxon>Euarchontoglires</taxon>
        <taxon>Glires</taxon>
        <taxon>Rodentia</taxon>
        <taxon>Myomorpha</taxon>
        <taxon>Muroidea</taxon>
        <taxon>Muridae</taxon>
        <taxon>Murinae</taxon>
        <taxon>Mus</taxon>
        <taxon>Mus</taxon>
    </lineage>
</organism>
<keyword id="KW-0274">FAD</keyword>
<keyword id="KW-0276">Fatty acid metabolism</keyword>
<keyword id="KW-0285">Flavoprotein</keyword>
<keyword id="KW-0443">Lipid metabolism</keyword>
<keyword id="KW-0560">Oxidoreductase</keyword>
<keyword id="KW-0576">Peroxisome</keyword>
<keyword id="KW-0597">Phosphoprotein</keyword>
<keyword id="KW-1185">Reference proteome</keyword>
<evidence type="ECO:0000250" key="1">
    <source>
        <dbReference type="UniProtKB" id="O15254"/>
    </source>
</evidence>
<evidence type="ECO:0000250" key="2">
    <source>
        <dbReference type="UniProtKB" id="P07872"/>
    </source>
</evidence>
<evidence type="ECO:0000250" key="3">
    <source>
        <dbReference type="UniProtKB" id="Q63448"/>
    </source>
</evidence>
<evidence type="ECO:0000305" key="4"/>
<evidence type="ECO:0007744" key="5">
    <source>
    </source>
</evidence>
<proteinExistence type="evidence at protein level"/>
<sequence length="700" mass="78404">MGSLPEEKDSALWSDTPKGPLSAYRARASFNSGELLLFWDGQDVIHFKKTIFSTLENDPLFARSYGADLPLEKLRELNFLRCKRVFEYGFFKVEELLKNPLKILVLINCLGMYDWSLANKCVLHMLVFGTTVFVSGSEKHFKYLEKIYSLEIFGCFALTELSHGSNTKAMRTTAHYDPDTQEFILHSPDFEAAKFWVGNLGKTATHAVVFAQLYMPDGQCHGLHSFLVQIRDTKTLLPMTGVMVGDIGKKLGQNGLDNGFAMFNKVRIPRQNLLDRTGNITSEGTYNSPFKDVRQRLGASLGSLSSGRISIISMSVVNLKLAVSIAIRFSATRCQFGPTDKEEIPVLEYPLQQWRILPYLAAAYALDHFSKTIFMDLIEVQSARLRGDHSDQQAELGREIHALASAGKPLASWTAQRGIQECREACGGHGYLAMNRFGDLRNDNDPNCTYEGDNNVLLQQTSNYLLSLLEPPLQDGAHFTSPLKTVDFLEAYPGILGQKFLGSSKADWMDSAAPLAAYRWLVCYLLQESHRRYCQEKKSRGSDFEARNNSQVYGCRPLALAFMELTVMQRFHEHIHSSGLSPSLRTVLGRLSTLYGLWCLSQHMALLYRGGYISGEQTGRAMEDAILTLCEQLKDDAVALVDVIAPSDFVLNSPIAKADGELYKNLWAAVLQQNGVLERAAWWPEFSANKSVADRLKSQL</sequence>